<reference key="1">
    <citation type="journal article" date="2006" name="Proc. Natl. Acad. Sci. U.S.A.">
        <title>The complete genome sequence of Lactobacillus bulgaricus reveals extensive and ongoing reductive evolution.</title>
        <authorList>
            <person name="van de Guchte M."/>
            <person name="Penaud S."/>
            <person name="Grimaldi C."/>
            <person name="Barbe V."/>
            <person name="Bryson K."/>
            <person name="Nicolas P."/>
            <person name="Robert C."/>
            <person name="Oztas S."/>
            <person name="Mangenot S."/>
            <person name="Couloux A."/>
            <person name="Loux V."/>
            <person name="Dervyn R."/>
            <person name="Bossy R."/>
            <person name="Bolotin A."/>
            <person name="Batto J.-M."/>
            <person name="Walunas T."/>
            <person name="Gibrat J.-F."/>
            <person name="Bessieres P."/>
            <person name="Weissenbach J."/>
            <person name="Ehrlich S.D."/>
            <person name="Maguin E."/>
        </authorList>
    </citation>
    <scope>NUCLEOTIDE SEQUENCE [LARGE SCALE GENOMIC DNA]</scope>
    <source>
        <strain>ATCC 11842 / DSM 20081 / BCRC 10696 / JCM 1002 / NBRC 13953 / NCIMB 11778 / NCTC 12712 / WDCM 00102 / Lb 14</strain>
    </source>
</reference>
<gene>
    <name evidence="2" type="primary">trmB</name>
    <name type="ordered locus">Ldb1525</name>
</gene>
<evidence type="ECO:0000250" key="1"/>
<evidence type="ECO:0000255" key="2">
    <source>
        <dbReference type="HAMAP-Rule" id="MF_01057"/>
    </source>
</evidence>
<evidence type="ECO:0000256" key="3">
    <source>
        <dbReference type="SAM" id="MobiDB-lite"/>
    </source>
</evidence>
<sequence length="218" mass="24873">MRLKNKPWANELVEEHPESALDRPDPAEKIDWEARFGNDKPIEIEVGSGKGQFITTLAKQHPDRNFVAMEIQKTAAGIILKKKLDEGLDNLQILCADAANLVAYFGENSTSKIYLNFSDPWPKSRHEKRRLTYKDFLAKYQAVLTGDGLIEFKTDNSGLFAYSVKSMNNYGMHFDFMSVDLHHESEEIVEKNVETEYEHKFASKGQPIYCLHAGFLAK</sequence>
<proteinExistence type="inferred from homology"/>
<name>TRMB_LACDA</name>
<feature type="chain" id="PRO_0000288163" description="tRNA (guanine-N(7)-)-methyltransferase">
    <location>
        <begin position="1"/>
        <end position="218"/>
    </location>
</feature>
<feature type="region of interest" description="Disordered" evidence="3">
    <location>
        <begin position="1"/>
        <end position="26"/>
    </location>
</feature>
<feature type="region of interest" description="Interaction with RNA" evidence="2">
    <location>
        <begin position="125"/>
        <end position="130"/>
    </location>
</feature>
<feature type="compositionally biased region" description="Basic and acidic residues" evidence="3">
    <location>
        <begin position="13"/>
        <end position="26"/>
    </location>
</feature>
<feature type="active site" evidence="1">
    <location>
        <position position="119"/>
    </location>
</feature>
<feature type="binding site" evidence="2">
    <location>
        <position position="45"/>
    </location>
    <ligand>
        <name>S-adenosyl-L-methionine</name>
        <dbReference type="ChEBI" id="CHEBI:59789"/>
    </ligand>
</feature>
<feature type="binding site" evidence="2">
    <location>
        <position position="70"/>
    </location>
    <ligand>
        <name>S-adenosyl-L-methionine</name>
        <dbReference type="ChEBI" id="CHEBI:59789"/>
    </ligand>
</feature>
<feature type="binding site" evidence="2">
    <location>
        <position position="97"/>
    </location>
    <ligand>
        <name>S-adenosyl-L-methionine</name>
        <dbReference type="ChEBI" id="CHEBI:59789"/>
    </ligand>
</feature>
<feature type="binding site" evidence="2">
    <location>
        <position position="119"/>
    </location>
    <ligand>
        <name>S-adenosyl-L-methionine</name>
        <dbReference type="ChEBI" id="CHEBI:59789"/>
    </ligand>
</feature>
<feature type="binding site" evidence="2">
    <location>
        <position position="123"/>
    </location>
    <ligand>
        <name>substrate</name>
    </ligand>
</feature>
<feature type="binding site" evidence="2">
    <location>
        <position position="155"/>
    </location>
    <ligand>
        <name>substrate</name>
    </ligand>
</feature>
<feature type="binding site" evidence="2">
    <location>
        <begin position="195"/>
        <end position="198"/>
    </location>
    <ligand>
        <name>substrate</name>
    </ligand>
</feature>
<accession>Q1G997</accession>
<keyword id="KW-0489">Methyltransferase</keyword>
<keyword id="KW-1185">Reference proteome</keyword>
<keyword id="KW-0949">S-adenosyl-L-methionine</keyword>
<keyword id="KW-0808">Transferase</keyword>
<keyword id="KW-0819">tRNA processing</keyword>
<dbReference type="EC" id="2.1.1.33" evidence="2"/>
<dbReference type="EMBL" id="CR954253">
    <property type="protein sequence ID" value="CAI98325.1"/>
    <property type="molecule type" value="Genomic_DNA"/>
</dbReference>
<dbReference type="RefSeq" id="WP_011544085.1">
    <property type="nucleotide sequence ID" value="NC_008054.1"/>
</dbReference>
<dbReference type="SMR" id="Q1G997"/>
<dbReference type="STRING" id="390333.Ldb1525"/>
<dbReference type="KEGG" id="ldb:Ldb1525"/>
<dbReference type="PATRIC" id="fig|390333.13.peg.875"/>
<dbReference type="eggNOG" id="COG0220">
    <property type="taxonomic scope" value="Bacteria"/>
</dbReference>
<dbReference type="HOGENOM" id="CLU_050910_2_1_9"/>
<dbReference type="BioCyc" id="LDEL390333:LDB_RS06580-MONOMER"/>
<dbReference type="UniPathway" id="UPA00989"/>
<dbReference type="Proteomes" id="UP000001259">
    <property type="component" value="Chromosome"/>
</dbReference>
<dbReference type="GO" id="GO:0043527">
    <property type="term" value="C:tRNA methyltransferase complex"/>
    <property type="evidence" value="ECO:0007669"/>
    <property type="project" value="TreeGrafter"/>
</dbReference>
<dbReference type="GO" id="GO:0008176">
    <property type="term" value="F:tRNA (guanine(46)-N7)-methyltransferase activity"/>
    <property type="evidence" value="ECO:0007669"/>
    <property type="project" value="UniProtKB-UniRule"/>
</dbReference>
<dbReference type="CDD" id="cd02440">
    <property type="entry name" value="AdoMet_MTases"/>
    <property type="match status" value="1"/>
</dbReference>
<dbReference type="FunFam" id="3.40.50.150:FF:000035">
    <property type="entry name" value="tRNA (guanine-N(7)-)-methyltransferase"/>
    <property type="match status" value="1"/>
</dbReference>
<dbReference type="Gene3D" id="3.40.50.150">
    <property type="entry name" value="Vaccinia Virus protein VP39"/>
    <property type="match status" value="1"/>
</dbReference>
<dbReference type="HAMAP" id="MF_01057">
    <property type="entry name" value="tRNA_methyltr_TrmB"/>
    <property type="match status" value="1"/>
</dbReference>
<dbReference type="InterPro" id="IPR029063">
    <property type="entry name" value="SAM-dependent_MTases_sf"/>
</dbReference>
<dbReference type="InterPro" id="IPR003358">
    <property type="entry name" value="tRNA_(Gua-N-7)_MeTrfase_Trmb"/>
</dbReference>
<dbReference type="InterPro" id="IPR055361">
    <property type="entry name" value="tRNA_methyltr_TrmB_bact"/>
</dbReference>
<dbReference type="NCBIfam" id="NF001080">
    <property type="entry name" value="PRK00121.2-2"/>
    <property type="match status" value="1"/>
</dbReference>
<dbReference type="NCBIfam" id="TIGR00091">
    <property type="entry name" value="tRNA (guanosine(46)-N7)-methyltransferase TrmB"/>
    <property type="match status" value="1"/>
</dbReference>
<dbReference type="PANTHER" id="PTHR23417">
    <property type="entry name" value="3-DEOXY-D-MANNO-OCTULOSONIC-ACID TRANSFERASE/TRNA GUANINE-N 7 - -METHYLTRANSFERASE"/>
    <property type="match status" value="1"/>
</dbReference>
<dbReference type="PANTHER" id="PTHR23417:SF14">
    <property type="entry name" value="PENTACOTRIPEPTIDE-REPEAT REGION OF PRORP DOMAIN-CONTAINING PROTEIN"/>
    <property type="match status" value="1"/>
</dbReference>
<dbReference type="Pfam" id="PF02390">
    <property type="entry name" value="Methyltransf_4"/>
    <property type="match status" value="1"/>
</dbReference>
<dbReference type="SUPFAM" id="SSF53335">
    <property type="entry name" value="S-adenosyl-L-methionine-dependent methyltransferases"/>
    <property type="match status" value="1"/>
</dbReference>
<dbReference type="PROSITE" id="PS51625">
    <property type="entry name" value="SAM_MT_TRMB"/>
    <property type="match status" value="1"/>
</dbReference>
<organism>
    <name type="scientific">Lactobacillus delbrueckii subsp. bulgaricus (strain ATCC 11842 / DSM 20081 / BCRC 10696 / JCM 1002 / NBRC 13953 / NCIMB 11778 / NCTC 12712 / WDCM 00102 / Lb 14)</name>
    <dbReference type="NCBI Taxonomy" id="390333"/>
    <lineage>
        <taxon>Bacteria</taxon>
        <taxon>Bacillati</taxon>
        <taxon>Bacillota</taxon>
        <taxon>Bacilli</taxon>
        <taxon>Lactobacillales</taxon>
        <taxon>Lactobacillaceae</taxon>
        <taxon>Lactobacillus</taxon>
    </lineage>
</organism>
<protein>
    <recommendedName>
        <fullName evidence="2">tRNA (guanine-N(7)-)-methyltransferase</fullName>
        <ecNumber evidence="2">2.1.1.33</ecNumber>
    </recommendedName>
    <alternativeName>
        <fullName evidence="2">tRNA (guanine(46)-N(7))-methyltransferase</fullName>
    </alternativeName>
    <alternativeName>
        <fullName evidence="2">tRNA(m7G46)-methyltransferase</fullName>
    </alternativeName>
</protein>
<comment type="function">
    <text evidence="2">Catalyzes the formation of N(7)-methylguanine at position 46 (m7G46) in tRNA.</text>
</comment>
<comment type="catalytic activity">
    <reaction evidence="2">
        <text>guanosine(46) in tRNA + S-adenosyl-L-methionine = N(7)-methylguanosine(46) in tRNA + S-adenosyl-L-homocysteine</text>
        <dbReference type="Rhea" id="RHEA:42708"/>
        <dbReference type="Rhea" id="RHEA-COMP:10188"/>
        <dbReference type="Rhea" id="RHEA-COMP:10189"/>
        <dbReference type="ChEBI" id="CHEBI:57856"/>
        <dbReference type="ChEBI" id="CHEBI:59789"/>
        <dbReference type="ChEBI" id="CHEBI:74269"/>
        <dbReference type="ChEBI" id="CHEBI:74480"/>
        <dbReference type="EC" id="2.1.1.33"/>
    </reaction>
</comment>
<comment type="pathway">
    <text evidence="2">tRNA modification; N(7)-methylguanine-tRNA biosynthesis.</text>
</comment>
<comment type="similarity">
    <text evidence="2">Belongs to the class I-like SAM-binding methyltransferase superfamily. TrmB family.</text>
</comment>